<proteinExistence type="inferred from homology"/>
<feature type="chain" id="PRO_0000451617" description="Speedy protein E8">
    <location>
        <begin position="1"/>
        <end position="265"/>
    </location>
</feature>
<feature type="region of interest" description="Disordered" evidence="1">
    <location>
        <begin position="1"/>
        <end position="80"/>
    </location>
</feature>
<feature type="compositionally biased region" description="Acidic residues" evidence="1">
    <location>
        <begin position="66"/>
        <end position="80"/>
    </location>
</feature>
<comment type="similarity">
    <text evidence="2">Belongs to the Speedy/Ringo family.</text>
</comment>
<organism>
    <name type="scientific">Homo sapiens</name>
    <name type="common">Human</name>
    <dbReference type="NCBI Taxonomy" id="9606"/>
    <lineage>
        <taxon>Eukaryota</taxon>
        <taxon>Metazoa</taxon>
        <taxon>Chordata</taxon>
        <taxon>Craniata</taxon>
        <taxon>Vertebrata</taxon>
        <taxon>Euteleostomi</taxon>
        <taxon>Mammalia</taxon>
        <taxon>Eutheria</taxon>
        <taxon>Euarchontoglires</taxon>
        <taxon>Primates</taxon>
        <taxon>Haplorrhini</taxon>
        <taxon>Catarrhini</taxon>
        <taxon>Hominidae</taxon>
        <taxon>Homo</taxon>
    </lineage>
</organism>
<accession>P0DUD1</accession>
<dbReference type="EMBL" id="AC211476">
    <property type="status" value="NOT_ANNOTATED_CDS"/>
    <property type="molecule type" value="Genomic_DNA"/>
</dbReference>
<dbReference type="CCDS" id="CCDS94114.1"/>
<dbReference type="RefSeq" id="NP_001369454.1">
    <property type="nucleotide sequence ID" value="NM_001382525.2"/>
</dbReference>
<dbReference type="RefSeq" id="XP_006716273.1">
    <property type="nucleotide sequence ID" value="XM_006716210.3"/>
</dbReference>
<dbReference type="RefSeq" id="XP_006716275.1">
    <property type="nucleotide sequence ID" value="XM_006716212.3"/>
</dbReference>
<dbReference type="RefSeq" id="XP_006726497.1">
    <property type="nucleotide sequence ID" value="XM_006726434.3"/>
</dbReference>
<dbReference type="RefSeq" id="XP_016868377.1">
    <property type="nucleotide sequence ID" value="XM_017012888.1"/>
</dbReference>
<dbReference type="RefSeq" id="XP_016868422.1">
    <property type="nucleotide sequence ID" value="XM_017012933.1"/>
</dbReference>
<dbReference type="RefSeq" id="XP_016885939.1">
    <property type="nucleotide sequence ID" value="XM_017030450.1"/>
</dbReference>
<dbReference type="SMR" id="P0DUD1"/>
<dbReference type="MassIVE" id="P0DUD1"/>
<dbReference type="Ensembl" id="ENST00000333385.11">
    <property type="protein sequence ID" value="ENSP00000498819.1"/>
    <property type="gene ID" value="ENSG00000273520.6"/>
</dbReference>
<dbReference type="GeneID" id="728524"/>
<dbReference type="MANE-Select" id="ENST00000333385.11">
    <property type="protein sequence ID" value="ENSP00000498819.1"/>
    <property type="RefSeq nucleotide sequence ID" value="NM_001382525.2"/>
    <property type="RefSeq protein sequence ID" value="NP_001369454.1"/>
</dbReference>
<dbReference type="AGR" id="HGNC:33771"/>
<dbReference type="GeneCards" id="SPDYE8"/>
<dbReference type="HGNC" id="HGNC:33771">
    <property type="gene designation" value="SPDYE8"/>
</dbReference>
<dbReference type="HPA" id="ENSG00000273520">
    <property type="expression patterns" value="Not detected"/>
</dbReference>
<dbReference type="neXtProt" id="NX_P0DUD1"/>
<dbReference type="InParanoid" id="P0DUD1"/>
<dbReference type="OrthoDB" id="9442170at2759"/>
<dbReference type="Proteomes" id="UP000005640">
    <property type="component" value="Chromosome 7"/>
</dbReference>
<dbReference type="Bgee" id="ENSG00000273520">
    <property type="expression patterns" value="Expressed in stromal cell of endometrium and 13 other cell types or tissues"/>
</dbReference>
<dbReference type="ExpressionAtlas" id="P0DUD1">
    <property type="expression patterns" value="baseline"/>
</dbReference>
<dbReference type="GO" id="GO:0019901">
    <property type="term" value="F:protein kinase binding"/>
    <property type="evidence" value="ECO:0000318"/>
    <property type="project" value="GO_Central"/>
</dbReference>
<dbReference type="InterPro" id="IPR020984">
    <property type="entry name" value="Speedy"/>
</dbReference>
<dbReference type="PANTHER" id="PTHR31156">
    <property type="entry name" value="WBSCR19-LIKE PROTEIN"/>
    <property type="match status" value="1"/>
</dbReference>
<dbReference type="Pfam" id="PF11357">
    <property type="entry name" value="Spy1"/>
    <property type="match status" value="1"/>
</dbReference>
<keyword id="KW-1185">Reference proteome</keyword>
<protein>
    <recommendedName>
        <fullName evidence="2">Speedy protein E8</fullName>
    </recommendedName>
</protein>
<gene>
    <name evidence="3" type="primary">SPDYE8</name>
</gene>
<evidence type="ECO:0000256" key="1">
    <source>
        <dbReference type="SAM" id="MobiDB-lite"/>
    </source>
</evidence>
<evidence type="ECO:0000305" key="2"/>
<evidence type="ECO:0000312" key="3">
    <source>
        <dbReference type="HGNC" id="HGNC:33771"/>
    </source>
</evidence>
<name>SPD8_HUMAN</name>
<sequence length="265" mass="31441">MGQILGKIMMSHQPQPQEERSPQRSTSGYPLQEVVDDEVSGPSAPGVDPSPPRRSLGWKRKRECLDESDDEPEKELAPEPEETWVAETLCGLKMKAKRRRVSLVLPEYYEAFNRLLEDPVIKRLLAWDKDLRVSDKYLLAMVIAYFSRAGLPSWQYQRIHFFLALYLANDMEEDDEAPKQNIFYFLYEETRSHIPLLSELWFQLCRYMNPRARKNCSQIALFRKYRFHFFCSMRCRAWVSLEELEEIQAYDPEHWVWARDRAHLS</sequence>
<reference key="1">
    <citation type="journal article" date="2003" name="Nature">
        <title>The DNA sequence of human chromosome 7.</title>
        <authorList>
            <person name="Hillier L.W."/>
            <person name="Fulton R.S."/>
            <person name="Fulton L.A."/>
            <person name="Graves T.A."/>
            <person name="Pepin K.H."/>
            <person name="Wagner-McPherson C."/>
            <person name="Layman D."/>
            <person name="Maas J."/>
            <person name="Jaeger S."/>
            <person name="Walker R."/>
            <person name="Wylie K."/>
            <person name="Sekhon M."/>
            <person name="Becker M.C."/>
            <person name="O'Laughlin M.D."/>
            <person name="Schaller M.E."/>
            <person name="Fewell G.A."/>
            <person name="Delehaunty K.D."/>
            <person name="Miner T.L."/>
            <person name="Nash W.E."/>
            <person name="Cordes M."/>
            <person name="Du H."/>
            <person name="Sun H."/>
            <person name="Edwards J."/>
            <person name="Bradshaw-Cordum H."/>
            <person name="Ali J."/>
            <person name="Andrews S."/>
            <person name="Isak A."/>
            <person name="Vanbrunt A."/>
            <person name="Nguyen C."/>
            <person name="Du F."/>
            <person name="Lamar B."/>
            <person name="Courtney L."/>
            <person name="Kalicki J."/>
            <person name="Ozersky P."/>
            <person name="Bielicki L."/>
            <person name="Scott K."/>
            <person name="Holmes A."/>
            <person name="Harkins R."/>
            <person name="Harris A."/>
            <person name="Strong C.M."/>
            <person name="Hou S."/>
            <person name="Tomlinson C."/>
            <person name="Dauphin-Kohlberg S."/>
            <person name="Kozlowicz-Reilly A."/>
            <person name="Leonard S."/>
            <person name="Rohlfing T."/>
            <person name="Rock S.M."/>
            <person name="Tin-Wollam A.-M."/>
            <person name="Abbott A."/>
            <person name="Minx P."/>
            <person name="Maupin R."/>
            <person name="Strowmatt C."/>
            <person name="Latreille P."/>
            <person name="Miller N."/>
            <person name="Johnson D."/>
            <person name="Murray J."/>
            <person name="Woessner J.P."/>
            <person name="Wendl M.C."/>
            <person name="Yang S.-P."/>
            <person name="Schultz B.R."/>
            <person name="Wallis J.W."/>
            <person name="Spieth J."/>
            <person name="Bieri T.A."/>
            <person name="Nelson J.O."/>
            <person name="Berkowicz N."/>
            <person name="Wohldmann P.E."/>
            <person name="Cook L.L."/>
            <person name="Hickenbotham M.T."/>
            <person name="Eldred J."/>
            <person name="Williams D."/>
            <person name="Bedell J.A."/>
            <person name="Mardis E.R."/>
            <person name="Clifton S.W."/>
            <person name="Chissoe S.L."/>
            <person name="Marra M.A."/>
            <person name="Raymond C."/>
            <person name="Haugen E."/>
            <person name="Gillett W."/>
            <person name="Zhou Y."/>
            <person name="James R."/>
            <person name="Phelps K."/>
            <person name="Iadanoto S."/>
            <person name="Bubb K."/>
            <person name="Simms E."/>
            <person name="Levy R."/>
            <person name="Clendenning J."/>
            <person name="Kaul R."/>
            <person name="Kent W.J."/>
            <person name="Furey T.S."/>
            <person name="Baertsch R.A."/>
            <person name="Brent M.R."/>
            <person name="Keibler E."/>
            <person name="Flicek P."/>
            <person name="Bork P."/>
            <person name="Suyama M."/>
            <person name="Bailey J.A."/>
            <person name="Portnoy M.E."/>
            <person name="Torrents D."/>
            <person name="Chinwalla A.T."/>
            <person name="Gish W.R."/>
            <person name="Eddy S.R."/>
            <person name="McPherson J.D."/>
            <person name="Olson M.V."/>
            <person name="Eichler E.E."/>
            <person name="Green E.D."/>
            <person name="Waterston R.H."/>
            <person name="Wilson R.K."/>
        </authorList>
    </citation>
    <scope>NUCLEOTIDE SEQUENCE [LARGE SCALE GENOMIC DNA]</scope>
</reference>